<dbReference type="EMBL" id="X03966">
    <property type="protein sequence ID" value="CAA27601.1"/>
    <property type="status" value="ALT_INIT"/>
    <property type="molecule type" value="Genomic_DNA"/>
</dbReference>
<dbReference type="EMBL" id="U29581">
    <property type="protein sequence ID" value="AAB40472.1"/>
    <property type="molecule type" value="Genomic_DNA"/>
</dbReference>
<dbReference type="EMBL" id="U00096">
    <property type="protein sequence ID" value="AAC75864.1"/>
    <property type="molecule type" value="Genomic_DNA"/>
</dbReference>
<dbReference type="EMBL" id="AP009048">
    <property type="protein sequence ID" value="BAE76894.1"/>
    <property type="molecule type" value="Genomic_DNA"/>
</dbReference>
<dbReference type="PIR" id="B65065">
    <property type="entry name" value="QQEC30"/>
</dbReference>
<dbReference type="RefSeq" id="NP_417302.1">
    <property type="nucleotide sequence ID" value="NC_000913.3"/>
</dbReference>
<dbReference type="RefSeq" id="WP_001144315.1">
    <property type="nucleotide sequence ID" value="NZ_LN832404.1"/>
</dbReference>
<dbReference type="BioGRID" id="4261793">
    <property type="interactions" value="132"/>
</dbReference>
<dbReference type="FunCoup" id="P08371">
    <property type="interactions" value="48"/>
</dbReference>
<dbReference type="STRING" id="511145.b2825"/>
<dbReference type="PaxDb" id="511145-b2825"/>
<dbReference type="DNASU" id="948985"/>
<dbReference type="EnsemblBacteria" id="AAC75864">
    <property type="protein sequence ID" value="AAC75864"/>
    <property type="gene ID" value="b2825"/>
</dbReference>
<dbReference type="GeneID" id="948985"/>
<dbReference type="KEGG" id="ecj:JW5451"/>
<dbReference type="KEGG" id="eco:b2825"/>
<dbReference type="KEGG" id="ecoc:C3026_15510"/>
<dbReference type="PATRIC" id="fig|511145.12.peg.2923"/>
<dbReference type="EchoBASE" id="EB1145"/>
<dbReference type="eggNOG" id="COG4795">
    <property type="taxonomic scope" value="Bacteria"/>
</dbReference>
<dbReference type="HOGENOM" id="CLU_090952_0_0_6"/>
<dbReference type="InParanoid" id="P08371"/>
<dbReference type="OMA" id="WEKMTNP"/>
<dbReference type="OrthoDB" id="7059546at2"/>
<dbReference type="PhylomeDB" id="P08371"/>
<dbReference type="BioCyc" id="EcoCyc:EG11156-MONOMER"/>
<dbReference type="PRO" id="PR:P08371"/>
<dbReference type="Proteomes" id="UP000000625">
    <property type="component" value="Chromosome"/>
</dbReference>
<dbReference type="GO" id="GO:0016020">
    <property type="term" value="C:membrane"/>
    <property type="evidence" value="ECO:0007669"/>
    <property type="project" value="UniProtKB-SubCell"/>
</dbReference>
<dbReference type="GO" id="GO:0015628">
    <property type="term" value="P:protein secretion by the type II secretion system"/>
    <property type="evidence" value="ECO:0000318"/>
    <property type="project" value="GO_Central"/>
</dbReference>
<dbReference type="InterPro" id="IPR012902">
    <property type="entry name" value="N_methyl_site"/>
</dbReference>
<dbReference type="InterPro" id="IPR016419">
    <property type="entry name" value="Prepilin_Pept-dep_B_prd"/>
</dbReference>
<dbReference type="InterPro" id="IPR051621">
    <property type="entry name" value="T2SS_protein_J"/>
</dbReference>
<dbReference type="NCBIfam" id="TIGR02532">
    <property type="entry name" value="IV_pilin_GFxxxE"/>
    <property type="match status" value="1"/>
</dbReference>
<dbReference type="NCBIfam" id="NF007848">
    <property type="entry name" value="PRK10557.1"/>
    <property type="match status" value="1"/>
</dbReference>
<dbReference type="PANTHER" id="PTHR39583:SF3">
    <property type="entry name" value="PREPILIN PEPTIDASE-DEPENDENT PROTEIN B"/>
    <property type="match status" value="1"/>
</dbReference>
<dbReference type="PANTHER" id="PTHR39583">
    <property type="entry name" value="TYPE II SECRETION SYSTEM PROTEIN J-RELATED"/>
    <property type="match status" value="1"/>
</dbReference>
<dbReference type="Pfam" id="PF07963">
    <property type="entry name" value="N_methyl"/>
    <property type="match status" value="1"/>
</dbReference>
<dbReference type="PIRSF" id="PIRSF004525">
    <property type="entry name" value="Pilin_peptidase-dep_B_prd"/>
    <property type="match status" value="1"/>
</dbReference>
<dbReference type="PROSITE" id="PS00409">
    <property type="entry name" value="PROKAR_NTER_METHYL"/>
    <property type="match status" value="1"/>
</dbReference>
<gene>
    <name type="primary">ppdB</name>
    <name type="synonym">ygdC</name>
    <name type="ordered locus">b2825</name>
    <name type="ordered locus">JW5451</name>
</gene>
<keyword id="KW-0472">Membrane</keyword>
<keyword id="KW-0488">Methylation</keyword>
<keyword id="KW-1185">Reference proteome</keyword>
<keyword id="KW-0812">Transmembrane</keyword>
<keyword id="KW-1133">Transmembrane helix</keyword>
<feature type="propeptide" id="PRO_0000024276" description="Leader sequence" evidence="2">
    <location>
        <begin position="1"/>
        <end position="7"/>
    </location>
</feature>
<feature type="chain" id="PRO_0000024277" description="Prepilin peptidase-dependent protein B">
    <location>
        <begin position="8"/>
        <end position="187"/>
    </location>
</feature>
<feature type="transmembrane region" description="Helical" evidence="1">
    <location>
        <begin position="8"/>
        <end position="28"/>
    </location>
</feature>
<feature type="modified residue" description="N-methylphenylalanine" evidence="2">
    <location>
        <position position="8"/>
    </location>
</feature>
<protein>
    <recommendedName>
        <fullName>Prepilin peptidase-dependent protein B</fullName>
    </recommendedName>
</protein>
<evidence type="ECO:0000255" key="1"/>
<evidence type="ECO:0000255" key="2">
    <source>
        <dbReference type="PROSITE-ProRule" id="PRU01070"/>
    </source>
</evidence>
<evidence type="ECO:0000305" key="3"/>
<accession>P08371</accession>
<accession>Q2MA12</accession>
<name>PPDB_ECOLI</name>
<sequence length="187" mass="20520">MPVKEQGFSLLEVLIAMAISSVLLLGAARFLPALQRESLTSTRKLALEDEIWLRVFTVAKHLQRAGYCHGICTGEGLEIVGQGDCVIVQWDANSNGIWDREPVKESDQIGFRLKEHVLETLRGATSCEGKGWDKVTNPDAIIIDTFQVVRQDVSGFSPVLTVNMRAASKSEPQTVVNASYSVTGFNL</sequence>
<proteinExistence type="inferred from homology"/>
<organism>
    <name type="scientific">Escherichia coli (strain K12)</name>
    <dbReference type="NCBI Taxonomy" id="83333"/>
    <lineage>
        <taxon>Bacteria</taxon>
        <taxon>Pseudomonadati</taxon>
        <taxon>Pseudomonadota</taxon>
        <taxon>Gammaproteobacteria</taxon>
        <taxon>Enterobacterales</taxon>
        <taxon>Enterobacteriaceae</taxon>
        <taxon>Escherichia</taxon>
    </lineage>
</organism>
<reference key="1">
    <citation type="journal article" date="1986" name="Nucleic Acids Res.">
        <title>Complete nucleotide sequence of the Escherichia coli recC gene and of the thyA-recC intergenic region.</title>
        <authorList>
            <person name="Finch P.W."/>
            <person name="Wilson R.E."/>
            <person name="Brown K."/>
            <person name="Hickson I.D."/>
            <person name="Tomkinson A.E."/>
            <person name="Emmerson P.T."/>
        </authorList>
    </citation>
    <scope>NUCLEOTIDE SEQUENCE [GENOMIC DNA]</scope>
</reference>
<reference key="2">
    <citation type="journal article" date="1997" name="Science">
        <title>The complete genome sequence of Escherichia coli K-12.</title>
        <authorList>
            <person name="Blattner F.R."/>
            <person name="Plunkett G. III"/>
            <person name="Bloch C.A."/>
            <person name="Perna N.T."/>
            <person name="Burland V."/>
            <person name="Riley M."/>
            <person name="Collado-Vides J."/>
            <person name="Glasner J.D."/>
            <person name="Rode C.K."/>
            <person name="Mayhew G.F."/>
            <person name="Gregor J."/>
            <person name="Davis N.W."/>
            <person name="Kirkpatrick H.A."/>
            <person name="Goeden M.A."/>
            <person name="Rose D.J."/>
            <person name="Mau B."/>
            <person name="Shao Y."/>
        </authorList>
    </citation>
    <scope>NUCLEOTIDE SEQUENCE [LARGE SCALE GENOMIC DNA]</scope>
    <source>
        <strain>K12 / MG1655 / ATCC 47076</strain>
    </source>
</reference>
<reference key="3">
    <citation type="journal article" date="2006" name="Mol. Syst. Biol.">
        <title>Highly accurate genome sequences of Escherichia coli K-12 strains MG1655 and W3110.</title>
        <authorList>
            <person name="Hayashi K."/>
            <person name="Morooka N."/>
            <person name="Yamamoto Y."/>
            <person name="Fujita K."/>
            <person name="Isono K."/>
            <person name="Choi S."/>
            <person name="Ohtsubo E."/>
            <person name="Baba T."/>
            <person name="Wanner B.L."/>
            <person name="Mori H."/>
            <person name="Horiuchi T."/>
        </authorList>
    </citation>
    <scope>NUCLEOTIDE SEQUENCE [LARGE SCALE GENOMIC DNA]</scope>
    <source>
        <strain>K12 / W3110 / ATCC 27325 / DSM 5911</strain>
    </source>
</reference>
<reference key="4">
    <citation type="journal article" date="1993" name="Mol. Microbiol.">
        <title>Common components in the assembly of type 4 fimbriae, DNA transfer systems, filamentous phage and protein-secretion apparatus: a general system for the formation of surface-associated protein complexes.</title>
        <authorList>
            <person name="Hobbs M."/>
            <person name="Mattick J.S."/>
        </authorList>
    </citation>
    <scope>IDENTIFICATION</scope>
</reference>
<comment type="function">
    <text>Not yet known.</text>
</comment>
<comment type="subcellular location">
    <subcellularLocation>
        <location evidence="1">Membrane</location>
        <topology evidence="1">Single-pass membrane protein</topology>
    </subcellularLocation>
</comment>
<comment type="sequence caution" evidence="3">
    <conflict type="erroneous initiation">
        <sequence resource="EMBL-CDS" id="CAA27601"/>
    </conflict>
</comment>